<feature type="chain" id="PRO_0000205895" description="Cell division topological specificity factor">
    <location>
        <begin position="1"/>
        <end position="85"/>
    </location>
</feature>
<name>MINE_XYLFA</name>
<dbReference type="EMBL" id="AE003849">
    <property type="protein sequence ID" value="AAF84129.1"/>
    <property type="molecule type" value="Genomic_DNA"/>
</dbReference>
<dbReference type="PIR" id="B82695">
    <property type="entry name" value="B82695"/>
</dbReference>
<dbReference type="RefSeq" id="WP_004090594.1">
    <property type="nucleotide sequence ID" value="NC_002488.3"/>
</dbReference>
<dbReference type="SMR" id="P65365"/>
<dbReference type="STRING" id="160492.XF_1320"/>
<dbReference type="GeneID" id="93904281"/>
<dbReference type="KEGG" id="xfa:XF_1320"/>
<dbReference type="eggNOG" id="COG0851">
    <property type="taxonomic scope" value="Bacteria"/>
</dbReference>
<dbReference type="HOGENOM" id="CLU_137929_2_1_6"/>
<dbReference type="Proteomes" id="UP000000812">
    <property type="component" value="Chromosome"/>
</dbReference>
<dbReference type="GO" id="GO:0051301">
    <property type="term" value="P:cell division"/>
    <property type="evidence" value="ECO:0007669"/>
    <property type="project" value="UniProtKB-KW"/>
</dbReference>
<dbReference type="GO" id="GO:0032955">
    <property type="term" value="P:regulation of division septum assembly"/>
    <property type="evidence" value="ECO:0007669"/>
    <property type="project" value="InterPro"/>
</dbReference>
<dbReference type="FunFam" id="3.30.1070.10:FF:000001">
    <property type="entry name" value="Cell division topological specificity factor"/>
    <property type="match status" value="1"/>
</dbReference>
<dbReference type="Gene3D" id="3.30.1070.10">
    <property type="entry name" value="Cell division topological specificity factor MinE"/>
    <property type="match status" value="1"/>
</dbReference>
<dbReference type="HAMAP" id="MF_00262">
    <property type="entry name" value="MinE"/>
    <property type="match status" value="1"/>
</dbReference>
<dbReference type="InterPro" id="IPR005527">
    <property type="entry name" value="MinE"/>
</dbReference>
<dbReference type="InterPro" id="IPR036707">
    <property type="entry name" value="MinE_sf"/>
</dbReference>
<dbReference type="NCBIfam" id="TIGR01215">
    <property type="entry name" value="minE"/>
    <property type="match status" value="1"/>
</dbReference>
<dbReference type="NCBIfam" id="NF001422">
    <property type="entry name" value="PRK00296.1"/>
    <property type="match status" value="1"/>
</dbReference>
<dbReference type="Pfam" id="PF03776">
    <property type="entry name" value="MinE"/>
    <property type="match status" value="1"/>
</dbReference>
<dbReference type="SUPFAM" id="SSF55229">
    <property type="entry name" value="Cell division protein MinE topological specificity domain"/>
    <property type="match status" value="1"/>
</dbReference>
<reference key="1">
    <citation type="journal article" date="2000" name="Nature">
        <title>The genome sequence of the plant pathogen Xylella fastidiosa.</title>
        <authorList>
            <person name="Simpson A.J.G."/>
            <person name="Reinach F.C."/>
            <person name="Arruda P."/>
            <person name="Abreu F.A."/>
            <person name="Acencio M."/>
            <person name="Alvarenga R."/>
            <person name="Alves L.M.C."/>
            <person name="Araya J.E."/>
            <person name="Baia G.S."/>
            <person name="Baptista C.S."/>
            <person name="Barros M.H."/>
            <person name="Bonaccorsi E.D."/>
            <person name="Bordin S."/>
            <person name="Bove J.M."/>
            <person name="Briones M.R.S."/>
            <person name="Bueno M.R.P."/>
            <person name="Camargo A.A."/>
            <person name="Camargo L.E.A."/>
            <person name="Carraro D.M."/>
            <person name="Carrer H."/>
            <person name="Colauto N.B."/>
            <person name="Colombo C."/>
            <person name="Costa F.F."/>
            <person name="Costa M.C.R."/>
            <person name="Costa-Neto C.M."/>
            <person name="Coutinho L.L."/>
            <person name="Cristofani M."/>
            <person name="Dias-Neto E."/>
            <person name="Docena C."/>
            <person name="El-Dorry H."/>
            <person name="Facincani A.P."/>
            <person name="Ferreira A.J.S."/>
            <person name="Ferreira V.C.A."/>
            <person name="Ferro J.A."/>
            <person name="Fraga J.S."/>
            <person name="Franca S.C."/>
            <person name="Franco M.C."/>
            <person name="Frohme M."/>
            <person name="Furlan L.R."/>
            <person name="Garnier M."/>
            <person name="Goldman G.H."/>
            <person name="Goldman M.H.S."/>
            <person name="Gomes S.L."/>
            <person name="Gruber A."/>
            <person name="Ho P.L."/>
            <person name="Hoheisel J.D."/>
            <person name="Junqueira M.L."/>
            <person name="Kemper E.L."/>
            <person name="Kitajima J.P."/>
            <person name="Krieger J.E."/>
            <person name="Kuramae E.E."/>
            <person name="Laigret F."/>
            <person name="Lambais M.R."/>
            <person name="Leite L.C.C."/>
            <person name="Lemos E.G.M."/>
            <person name="Lemos M.V.F."/>
            <person name="Lopes S.A."/>
            <person name="Lopes C.R."/>
            <person name="Machado J.A."/>
            <person name="Machado M.A."/>
            <person name="Madeira A.M.B.N."/>
            <person name="Madeira H.M.F."/>
            <person name="Marino C.L."/>
            <person name="Marques M.V."/>
            <person name="Martins E.A.L."/>
            <person name="Martins E.M.F."/>
            <person name="Matsukuma A.Y."/>
            <person name="Menck C.F.M."/>
            <person name="Miracca E.C."/>
            <person name="Miyaki C.Y."/>
            <person name="Monteiro-Vitorello C.B."/>
            <person name="Moon D.H."/>
            <person name="Nagai M.A."/>
            <person name="Nascimento A.L.T.O."/>
            <person name="Netto L.E.S."/>
            <person name="Nhani A. Jr."/>
            <person name="Nobrega F.G."/>
            <person name="Nunes L.R."/>
            <person name="Oliveira M.A."/>
            <person name="de Oliveira M.C."/>
            <person name="de Oliveira R.C."/>
            <person name="Palmieri D.A."/>
            <person name="Paris A."/>
            <person name="Peixoto B.R."/>
            <person name="Pereira G.A.G."/>
            <person name="Pereira H.A. Jr."/>
            <person name="Pesquero J.B."/>
            <person name="Quaggio R.B."/>
            <person name="Roberto P.G."/>
            <person name="Rodrigues V."/>
            <person name="de Rosa A.J.M."/>
            <person name="de Rosa V.E. Jr."/>
            <person name="de Sa R.G."/>
            <person name="Santelli R.V."/>
            <person name="Sawasaki H.E."/>
            <person name="da Silva A.C.R."/>
            <person name="da Silva A.M."/>
            <person name="da Silva F.R."/>
            <person name="Silva W.A. Jr."/>
            <person name="da Silveira J.F."/>
            <person name="Silvestri M.L.Z."/>
            <person name="Siqueira W.J."/>
            <person name="de Souza A.A."/>
            <person name="de Souza A.P."/>
            <person name="Terenzi M.F."/>
            <person name="Truffi D."/>
            <person name="Tsai S.M."/>
            <person name="Tsuhako M.H."/>
            <person name="Vallada H."/>
            <person name="Van Sluys M.A."/>
            <person name="Verjovski-Almeida S."/>
            <person name="Vettore A.L."/>
            <person name="Zago M.A."/>
            <person name="Zatz M."/>
            <person name="Meidanis J."/>
            <person name="Setubal J.C."/>
        </authorList>
    </citation>
    <scope>NUCLEOTIDE SEQUENCE [LARGE SCALE GENOMIC DNA]</scope>
    <source>
        <strain>9a5c</strain>
    </source>
</reference>
<gene>
    <name type="primary">minE</name>
    <name type="ordered locus">XF_1320</name>
</gene>
<sequence length="85" mass="9577">MGLIDFLRNKTKTAETAKNRLQIIIAQERTQRGGPDYLPLLQRELLEVIKKYVKIDADAVKVDLIKDGANDVLDISVALPDDSER</sequence>
<protein>
    <recommendedName>
        <fullName>Cell division topological specificity factor</fullName>
    </recommendedName>
</protein>
<keyword id="KW-0131">Cell cycle</keyword>
<keyword id="KW-0132">Cell division</keyword>
<comment type="function">
    <text evidence="1">Prevents the cell division inhibition by proteins MinC and MinD at internal division sites while permitting inhibition at polar sites. This ensures cell division at the proper site by restricting the formation of a division septum at the midpoint of the long axis of the cell (By similarity).</text>
</comment>
<comment type="similarity">
    <text evidence="2">Belongs to the MinE family.</text>
</comment>
<evidence type="ECO:0000250" key="1"/>
<evidence type="ECO:0000305" key="2"/>
<organism>
    <name type="scientific">Xylella fastidiosa (strain 9a5c)</name>
    <dbReference type="NCBI Taxonomy" id="160492"/>
    <lineage>
        <taxon>Bacteria</taxon>
        <taxon>Pseudomonadati</taxon>
        <taxon>Pseudomonadota</taxon>
        <taxon>Gammaproteobacteria</taxon>
        <taxon>Lysobacterales</taxon>
        <taxon>Lysobacteraceae</taxon>
        <taxon>Xylella</taxon>
    </lineage>
</organism>
<proteinExistence type="inferred from homology"/>
<accession>P65365</accession>
<accession>Q9PDQ9</accession>